<name>YLX3_CAEEL</name>
<protein>
    <recommendedName>
        <fullName>Uncharacterized protein F23F12.3</fullName>
    </recommendedName>
</protein>
<keyword id="KW-0472">Membrane</keyword>
<keyword id="KW-1185">Reference proteome</keyword>
<keyword id="KW-0812">Transmembrane</keyword>
<keyword id="KW-1133">Transmembrane helix</keyword>
<keyword id="KW-0813">Transport</keyword>
<organism>
    <name type="scientific">Caenorhabditis elegans</name>
    <dbReference type="NCBI Taxonomy" id="6239"/>
    <lineage>
        <taxon>Eukaryota</taxon>
        <taxon>Metazoa</taxon>
        <taxon>Ecdysozoa</taxon>
        <taxon>Nematoda</taxon>
        <taxon>Chromadorea</taxon>
        <taxon>Rhabditida</taxon>
        <taxon>Rhabditina</taxon>
        <taxon>Rhabditomorpha</taxon>
        <taxon>Rhabditoidea</taxon>
        <taxon>Rhabditidae</taxon>
        <taxon>Peloderinae</taxon>
        <taxon>Caenorhabditis</taxon>
    </lineage>
</organism>
<accession>P46499</accession>
<accession>P46497</accession>
<dbReference type="EMBL" id="FO081210">
    <property type="protein sequence ID" value="CCD69933.1"/>
    <property type="molecule type" value="Genomic_DNA"/>
</dbReference>
<dbReference type="PIR" id="E88485">
    <property type="entry name" value="E88485"/>
</dbReference>
<dbReference type="SMR" id="P46499"/>
<dbReference type="FunCoup" id="P46499">
    <property type="interactions" value="98"/>
</dbReference>
<dbReference type="IntAct" id="P46499">
    <property type="interactions" value="1"/>
</dbReference>
<dbReference type="STRING" id="6239.F23F12.3.1"/>
<dbReference type="PaxDb" id="6239-F23F12.3"/>
<dbReference type="EnsemblMetazoa" id="F23F12.3.1">
    <property type="protein sequence ID" value="F23F12.3.1"/>
    <property type="gene ID" value="WBGene00017751"/>
</dbReference>
<dbReference type="KEGG" id="cel:CELE_F23F12.3"/>
<dbReference type="AGR" id="WB:WBGene00017751"/>
<dbReference type="CTD" id="175926"/>
<dbReference type="WormBase" id="F23F12.3">
    <property type="protein sequence ID" value="CE45155"/>
    <property type="gene ID" value="WBGene00017751"/>
</dbReference>
<dbReference type="eggNOG" id="KOG0255">
    <property type="taxonomic scope" value="Eukaryota"/>
</dbReference>
<dbReference type="GeneTree" id="ENSGT00970000196352"/>
<dbReference type="HOGENOM" id="CLU_001265_33_8_1"/>
<dbReference type="InParanoid" id="P46499"/>
<dbReference type="OMA" id="YACQLIF"/>
<dbReference type="OrthoDB" id="3936150at2759"/>
<dbReference type="PhylomeDB" id="P46499"/>
<dbReference type="Reactome" id="R-CEL-112311">
    <property type="pathway name" value="Neurotransmitter clearance"/>
</dbReference>
<dbReference type="Reactome" id="R-CEL-181430">
    <property type="pathway name" value="Norepinephrine Neurotransmitter Release Cycle"/>
</dbReference>
<dbReference type="Reactome" id="R-CEL-200425">
    <property type="pathway name" value="Carnitine shuttle"/>
</dbReference>
<dbReference type="Reactome" id="R-CEL-2161517">
    <property type="pathway name" value="Abacavir transmembrane transport"/>
</dbReference>
<dbReference type="Reactome" id="R-CEL-442660">
    <property type="pathway name" value="Na+/Cl- dependent neurotransmitter transporters"/>
</dbReference>
<dbReference type="Reactome" id="R-CEL-549127">
    <property type="pathway name" value="Organic cation transport"/>
</dbReference>
<dbReference type="Reactome" id="R-CEL-561048">
    <property type="pathway name" value="Organic anion transport"/>
</dbReference>
<dbReference type="Reactome" id="R-CEL-9749641">
    <property type="pathway name" value="Aspirin ADME"/>
</dbReference>
<dbReference type="Reactome" id="R-CEL-9793528">
    <property type="pathway name" value="Ciprofloxacin ADME"/>
</dbReference>
<dbReference type="PRO" id="PR:P46499"/>
<dbReference type="Proteomes" id="UP000001940">
    <property type="component" value="Chromosome III"/>
</dbReference>
<dbReference type="Bgee" id="WBGene00017751">
    <property type="expression patterns" value="Expressed in larva and 1 other cell type or tissue"/>
</dbReference>
<dbReference type="GO" id="GO:0016020">
    <property type="term" value="C:membrane"/>
    <property type="evidence" value="ECO:0007669"/>
    <property type="project" value="UniProtKB-SubCell"/>
</dbReference>
<dbReference type="GO" id="GO:0022857">
    <property type="term" value="F:transmembrane transporter activity"/>
    <property type="evidence" value="ECO:0007669"/>
    <property type="project" value="InterPro"/>
</dbReference>
<dbReference type="CDD" id="cd17317">
    <property type="entry name" value="MFS_SLC22"/>
    <property type="match status" value="1"/>
</dbReference>
<dbReference type="Gene3D" id="1.20.1250.20">
    <property type="entry name" value="MFS general substrate transporter like domains"/>
    <property type="match status" value="1"/>
</dbReference>
<dbReference type="InterPro" id="IPR020846">
    <property type="entry name" value="MFS_dom"/>
</dbReference>
<dbReference type="InterPro" id="IPR005828">
    <property type="entry name" value="MFS_sugar_transport-like"/>
</dbReference>
<dbReference type="InterPro" id="IPR036259">
    <property type="entry name" value="MFS_trans_sf"/>
</dbReference>
<dbReference type="PANTHER" id="PTHR24064">
    <property type="entry name" value="SOLUTE CARRIER FAMILY 22 MEMBER"/>
    <property type="match status" value="1"/>
</dbReference>
<dbReference type="Pfam" id="PF00083">
    <property type="entry name" value="Sugar_tr"/>
    <property type="match status" value="1"/>
</dbReference>
<dbReference type="SUPFAM" id="SSF103473">
    <property type="entry name" value="MFS general substrate transporter"/>
    <property type="match status" value="1"/>
</dbReference>
<dbReference type="PROSITE" id="PS50850">
    <property type="entry name" value="MFS"/>
    <property type="match status" value="1"/>
</dbReference>
<reference key="1">
    <citation type="journal article" date="1998" name="Science">
        <title>Genome sequence of the nematode C. elegans: a platform for investigating biology.</title>
        <authorList>
            <consortium name="The C. elegans sequencing consortium"/>
        </authorList>
    </citation>
    <scope>NUCLEOTIDE SEQUENCE [LARGE SCALE GENOMIC DNA]</scope>
    <source>
        <strain>Bristol N2</strain>
    </source>
</reference>
<sequence length="507" mass="56953">MSFLNINRFHILCFFLWQFGLFYACQLIFPIFYNFHPGLSCEDPGFNFSKPKCKLSKVEICTELTANCSKWHIEPAPFHSMVQDFKMFCGTKAYDSAWIATIQFIGALVGALVYGHLGDHFGRKPVSFVGISIGIIFGVASGFAPSWEVFAVLLFICGTSVACIMIVFYAYILEFIEPEQRVFLRTFFNWGYARLVFTLVCFICGYWRSAAIATSLLALPILPVLLWLPESPKWYATKNRFQEMKEAEKKISWLSGISYVEREDRRTEKIEEKDTKVYTIRDLFSSWPIAYSTIVVGSLWFSTSVSSFGADLNSGNLAGNFYLSQFVQAAAIALSKLSIFLLDLFIPSFNRQRLHQVPQIIMIACYTTIMALMISPDSDCSSQGSRNLAIIIINIIGTSFIELTWDACYLVAAEIFPTRIRTIGIGTCSLLARIGALLAPQMAYLSEIYPPIPYIIVCSIGIISLLISCFFLPDTKGVDLGALDRNPLEESGDNKEEEISEIQIGTN</sequence>
<evidence type="ECO:0000255" key="1"/>
<evidence type="ECO:0000305" key="2"/>
<comment type="subcellular location">
    <subcellularLocation>
        <location evidence="2">Membrane</location>
        <topology evidence="2">Multi-pass membrane protein</topology>
    </subcellularLocation>
</comment>
<comment type="similarity">
    <text evidence="2">Belongs to the major facilitator superfamily.</text>
</comment>
<proteinExistence type="inferred from homology"/>
<gene>
    <name type="ORF">F23F12.3/F23F12.1</name>
</gene>
<feature type="chain" id="PRO_0000065311" description="Uncharacterized protein F23F12.3">
    <location>
        <begin position="1"/>
        <end position="507"/>
    </location>
</feature>
<feature type="transmembrane region" description="Helical" evidence="1">
    <location>
        <begin position="11"/>
        <end position="31"/>
    </location>
</feature>
<feature type="transmembrane region" description="Helical" evidence="1">
    <location>
        <begin position="97"/>
        <end position="117"/>
    </location>
</feature>
<feature type="transmembrane region" description="Helical" evidence="1">
    <location>
        <begin position="125"/>
        <end position="145"/>
    </location>
</feature>
<feature type="transmembrane region" description="Helical" evidence="1">
    <location>
        <begin position="149"/>
        <end position="169"/>
    </location>
</feature>
<feature type="transmembrane region" description="Helical" evidence="1">
    <location>
        <begin position="187"/>
        <end position="207"/>
    </location>
</feature>
<feature type="transmembrane region" description="Helical" evidence="1">
    <location>
        <begin position="209"/>
        <end position="229"/>
    </location>
</feature>
<feature type="transmembrane region" description="Helical" evidence="1">
    <location>
        <begin position="283"/>
        <end position="303"/>
    </location>
</feature>
<feature type="transmembrane region" description="Helical" evidence="1">
    <location>
        <begin position="326"/>
        <end position="346"/>
    </location>
</feature>
<feature type="transmembrane region" description="Helical" evidence="1">
    <location>
        <begin position="354"/>
        <end position="374"/>
    </location>
</feature>
<feature type="transmembrane region" description="Helical" evidence="1">
    <location>
        <begin position="388"/>
        <end position="408"/>
    </location>
</feature>
<feature type="transmembrane region" description="Helical" evidence="1">
    <location>
        <begin position="423"/>
        <end position="443"/>
    </location>
</feature>
<feature type="transmembrane region" description="Helical" evidence="1">
    <location>
        <begin position="452"/>
        <end position="472"/>
    </location>
</feature>